<feature type="chain" id="PRO_1000215613" description="Putative multidrug resistance protein MdtD">
    <location>
        <begin position="1"/>
        <end position="466"/>
    </location>
</feature>
<feature type="transmembrane region" description="Helical" evidence="1">
    <location>
        <begin position="11"/>
        <end position="31"/>
    </location>
</feature>
<feature type="transmembrane region" description="Helical" evidence="1">
    <location>
        <begin position="48"/>
        <end position="68"/>
    </location>
</feature>
<feature type="transmembrane region" description="Helical" evidence="1">
    <location>
        <begin position="71"/>
        <end position="91"/>
    </location>
</feature>
<feature type="transmembrane region" description="Helical" evidence="1">
    <location>
        <begin position="105"/>
        <end position="125"/>
    </location>
</feature>
<feature type="transmembrane region" description="Helical" evidence="1">
    <location>
        <begin position="137"/>
        <end position="157"/>
    </location>
</feature>
<feature type="transmembrane region" description="Helical" evidence="1">
    <location>
        <begin position="164"/>
        <end position="184"/>
    </location>
</feature>
<feature type="transmembrane region" description="Helical" evidence="1">
    <location>
        <begin position="194"/>
        <end position="214"/>
    </location>
</feature>
<feature type="transmembrane region" description="Helical" evidence="1">
    <location>
        <begin position="218"/>
        <end position="238"/>
    </location>
</feature>
<feature type="transmembrane region" description="Helical" evidence="1">
    <location>
        <begin position="262"/>
        <end position="282"/>
    </location>
</feature>
<feature type="transmembrane region" description="Helical" evidence="1">
    <location>
        <begin position="286"/>
        <end position="306"/>
    </location>
</feature>
<feature type="transmembrane region" description="Helical" evidence="1">
    <location>
        <begin position="328"/>
        <end position="347"/>
    </location>
</feature>
<feature type="transmembrane region" description="Helical" evidence="1">
    <location>
        <begin position="351"/>
        <end position="370"/>
    </location>
</feature>
<feature type="transmembrane region" description="Helical" evidence="1">
    <location>
        <begin position="403"/>
        <end position="423"/>
    </location>
</feature>
<feature type="transmembrane region" description="Helical" evidence="1">
    <location>
        <begin position="429"/>
        <end position="449"/>
    </location>
</feature>
<organism>
    <name type="scientific">Pectobacterium carotovorum subsp. carotovorum (strain PC1)</name>
    <dbReference type="NCBI Taxonomy" id="561230"/>
    <lineage>
        <taxon>Bacteria</taxon>
        <taxon>Pseudomonadati</taxon>
        <taxon>Pseudomonadota</taxon>
        <taxon>Gammaproteobacteria</taxon>
        <taxon>Enterobacterales</taxon>
        <taxon>Pectobacteriaceae</taxon>
        <taxon>Pectobacterium</taxon>
    </lineage>
</organism>
<protein>
    <recommendedName>
        <fullName evidence="1">Putative multidrug resistance protein MdtD</fullName>
    </recommendedName>
</protein>
<name>MDTD_PECCP</name>
<dbReference type="EMBL" id="CP001657">
    <property type="protein sequence ID" value="ACT13993.1"/>
    <property type="molecule type" value="Genomic_DNA"/>
</dbReference>
<dbReference type="RefSeq" id="WP_015841148.1">
    <property type="nucleotide sequence ID" value="NC_012917.1"/>
</dbReference>
<dbReference type="SMR" id="C6DBD0"/>
<dbReference type="STRING" id="561230.PC1_2970"/>
<dbReference type="KEGG" id="pct:PC1_2970"/>
<dbReference type="eggNOG" id="COG0477">
    <property type="taxonomic scope" value="Bacteria"/>
</dbReference>
<dbReference type="HOGENOM" id="CLU_000960_28_0_6"/>
<dbReference type="OrthoDB" id="9812221at2"/>
<dbReference type="Proteomes" id="UP000002736">
    <property type="component" value="Chromosome"/>
</dbReference>
<dbReference type="GO" id="GO:0005886">
    <property type="term" value="C:plasma membrane"/>
    <property type="evidence" value="ECO:0007669"/>
    <property type="project" value="UniProtKB-SubCell"/>
</dbReference>
<dbReference type="GO" id="GO:0022857">
    <property type="term" value="F:transmembrane transporter activity"/>
    <property type="evidence" value="ECO:0007669"/>
    <property type="project" value="UniProtKB-UniRule"/>
</dbReference>
<dbReference type="CDD" id="cd17503">
    <property type="entry name" value="MFS_LmrB_MDR_like"/>
    <property type="match status" value="1"/>
</dbReference>
<dbReference type="FunFam" id="1.20.1250.20:FF:000021">
    <property type="entry name" value="Putative multidrug resistance protein MdtD"/>
    <property type="match status" value="1"/>
</dbReference>
<dbReference type="FunFam" id="1.20.1720.10:FF:000001">
    <property type="entry name" value="Putative multidrug resistance protein MdtD"/>
    <property type="match status" value="1"/>
</dbReference>
<dbReference type="Gene3D" id="1.20.1250.20">
    <property type="entry name" value="MFS general substrate transporter like domains"/>
    <property type="match status" value="1"/>
</dbReference>
<dbReference type="Gene3D" id="1.20.1720.10">
    <property type="entry name" value="Multidrug resistance protein D"/>
    <property type="match status" value="1"/>
</dbReference>
<dbReference type="HAMAP" id="MF_01577">
    <property type="entry name" value="MFS_MdtD"/>
    <property type="match status" value="1"/>
</dbReference>
<dbReference type="InterPro" id="IPR004638">
    <property type="entry name" value="EmrB-like"/>
</dbReference>
<dbReference type="InterPro" id="IPR011701">
    <property type="entry name" value="MFS"/>
</dbReference>
<dbReference type="InterPro" id="IPR020846">
    <property type="entry name" value="MFS_dom"/>
</dbReference>
<dbReference type="InterPro" id="IPR036259">
    <property type="entry name" value="MFS_trans_sf"/>
</dbReference>
<dbReference type="InterPro" id="IPR023721">
    <property type="entry name" value="Multi-R_MdtD"/>
</dbReference>
<dbReference type="NCBIfam" id="TIGR00711">
    <property type="entry name" value="efflux_EmrB"/>
    <property type="match status" value="1"/>
</dbReference>
<dbReference type="NCBIfam" id="NF007799">
    <property type="entry name" value="PRK10504.1"/>
    <property type="match status" value="1"/>
</dbReference>
<dbReference type="PANTHER" id="PTHR42718:SF46">
    <property type="entry name" value="BLR6921 PROTEIN"/>
    <property type="match status" value="1"/>
</dbReference>
<dbReference type="PANTHER" id="PTHR42718">
    <property type="entry name" value="MAJOR FACILITATOR SUPERFAMILY MULTIDRUG TRANSPORTER MFSC"/>
    <property type="match status" value="1"/>
</dbReference>
<dbReference type="Pfam" id="PF07690">
    <property type="entry name" value="MFS_1"/>
    <property type="match status" value="1"/>
</dbReference>
<dbReference type="PRINTS" id="PR01036">
    <property type="entry name" value="TCRTETB"/>
</dbReference>
<dbReference type="SUPFAM" id="SSF103473">
    <property type="entry name" value="MFS general substrate transporter"/>
    <property type="match status" value="1"/>
</dbReference>
<dbReference type="PROSITE" id="PS50850">
    <property type="entry name" value="MFS"/>
    <property type="match status" value="1"/>
</dbReference>
<proteinExistence type="inferred from homology"/>
<reference key="1">
    <citation type="submission" date="2009-07" db="EMBL/GenBank/DDBJ databases">
        <title>Complete sequence of Pectobacterium carotovorum subsp. carotovorum PC1.</title>
        <authorList>
            <consortium name="US DOE Joint Genome Institute"/>
            <person name="Lucas S."/>
            <person name="Copeland A."/>
            <person name="Lapidus A."/>
            <person name="Glavina del Rio T."/>
            <person name="Tice H."/>
            <person name="Bruce D."/>
            <person name="Goodwin L."/>
            <person name="Pitluck S."/>
            <person name="Munk A.C."/>
            <person name="Brettin T."/>
            <person name="Detter J.C."/>
            <person name="Han C."/>
            <person name="Tapia R."/>
            <person name="Larimer F."/>
            <person name="Land M."/>
            <person name="Hauser L."/>
            <person name="Kyrpides N."/>
            <person name="Mikhailova N."/>
            <person name="Balakrishnan V."/>
            <person name="Glasner J."/>
            <person name="Perna N.T."/>
        </authorList>
    </citation>
    <scope>NUCLEOTIDE SEQUENCE [LARGE SCALE GENOMIC DNA]</scope>
    <source>
        <strain>PC1</strain>
    </source>
</reference>
<accession>C6DBD0</accession>
<gene>
    <name evidence="1" type="primary">mdtD</name>
    <name type="ordered locus">PC1_2970</name>
</gene>
<sequence>MMNSASVRWQLWIVAFGFFMQTLDTTIVNTALPSMAASLNESPLHMHSVIVSYVLTVAVMLPASGWLADRIGVKNIFFAAILLFTLGSLLCARSETLNELLASRVIQGIGGAMMVPVGRLTVMKIVPRDQYMAAMTFVTLPGQIGPLMGPALGGFLVEYASWHWIFLINLPVGIIGALATWFLMPNYTMRTQRFDISGFLWLAVGMATLTLALDGNRSLGIPPIAIFALITVGLIALLSYWLHARRNERALFNLRLFDTHTFSIGLTGGLLARIGSGMLPFMTPLFLQLGMGFSPFHAGLMMVPMVLGNMGMKRIVVQIVNRLGYRRVLIVSTLLLALVTALFALVALMQWIWMIPIVLFFLGMVNAIRFSTMNTLTLKDLPDTLASGGNSLMSMTMQLSTSLGVSIAGILLGMFSQPHMAAGSGETHMVFIYTYLSMIVIIALPALIFNRVPADTIKQSTLPRKS</sequence>
<comment type="subcellular location">
    <subcellularLocation>
        <location evidence="1">Cell inner membrane</location>
        <topology evidence="1">Multi-pass membrane protein</topology>
    </subcellularLocation>
</comment>
<comment type="similarity">
    <text evidence="1">Belongs to the major facilitator superfamily. TCR/Tet family.</text>
</comment>
<keyword id="KW-0997">Cell inner membrane</keyword>
<keyword id="KW-1003">Cell membrane</keyword>
<keyword id="KW-0472">Membrane</keyword>
<keyword id="KW-0812">Transmembrane</keyword>
<keyword id="KW-1133">Transmembrane helix</keyword>
<keyword id="KW-0813">Transport</keyword>
<evidence type="ECO:0000255" key="1">
    <source>
        <dbReference type="HAMAP-Rule" id="MF_01577"/>
    </source>
</evidence>